<proteinExistence type="inferred from homology"/>
<dbReference type="EC" id="2.1.1.113" evidence="1"/>
<dbReference type="EMBL" id="AF044681">
    <property type="protein sequence ID" value="AAC97178.1"/>
    <property type="molecule type" value="Genomic_DNA"/>
</dbReference>
<dbReference type="SMR" id="O52692"/>
<dbReference type="REBASE" id="3498">
    <property type="entry name" value="M.ScaI"/>
</dbReference>
<dbReference type="BRENDA" id="2.1.1.113">
    <property type="organism ID" value="5987"/>
</dbReference>
<dbReference type="PRO" id="PR:O52692"/>
<dbReference type="GO" id="GO:0003677">
    <property type="term" value="F:DNA binding"/>
    <property type="evidence" value="ECO:0007669"/>
    <property type="project" value="UniProtKB-KW"/>
</dbReference>
<dbReference type="GO" id="GO:0008170">
    <property type="term" value="F:N-methyltransferase activity"/>
    <property type="evidence" value="ECO:0007669"/>
    <property type="project" value="InterPro"/>
</dbReference>
<dbReference type="GO" id="GO:0015667">
    <property type="term" value="F:site-specific DNA-methyltransferase (cytosine-N4-specific) activity"/>
    <property type="evidence" value="ECO:0007669"/>
    <property type="project" value="UniProtKB-EC"/>
</dbReference>
<dbReference type="GO" id="GO:0009307">
    <property type="term" value="P:DNA restriction-modification system"/>
    <property type="evidence" value="ECO:0007669"/>
    <property type="project" value="UniProtKB-KW"/>
</dbReference>
<dbReference type="GO" id="GO:0032259">
    <property type="term" value="P:methylation"/>
    <property type="evidence" value="ECO:0007669"/>
    <property type="project" value="UniProtKB-KW"/>
</dbReference>
<dbReference type="Gene3D" id="3.40.50.150">
    <property type="entry name" value="Vaccinia Virus protein VP39"/>
    <property type="match status" value="1"/>
</dbReference>
<dbReference type="InterPro" id="IPR002941">
    <property type="entry name" value="DNA_methylase_N4/N6"/>
</dbReference>
<dbReference type="InterPro" id="IPR017985">
    <property type="entry name" value="MeTrfase_CN4_CS"/>
</dbReference>
<dbReference type="InterPro" id="IPR001091">
    <property type="entry name" value="RM_Methyltransferase"/>
</dbReference>
<dbReference type="InterPro" id="IPR029063">
    <property type="entry name" value="SAM-dependent_MTases_sf"/>
</dbReference>
<dbReference type="Pfam" id="PF01555">
    <property type="entry name" value="N6_N4_Mtase"/>
    <property type="match status" value="1"/>
</dbReference>
<dbReference type="PRINTS" id="PR00508">
    <property type="entry name" value="S21N4MTFRASE"/>
</dbReference>
<dbReference type="SUPFAM" id="SSF53335">
    <property type="entry name" value="S-adenosyl-L-methionine-dependent methyltransferases"/>
    <property type="match status" value="1"/>
</dbReference>
<dbReference type="PROSITE" id="PS00093">
    <property type="entry name" value="N4_MTASE"/>
    <property type="match status" value="1"/>
</dbReference>
<keyword id="KW-0238">DNA-binding</keyword>
<keyword id="KW-0489">Methyltransferase</keyword>
<keyword id="KW-0680">Restriction system</keyword>
<keyword id="KW-0949">S-adenosyl-L-methionine</keyword>
<keyword id="KW-0808">Transferase</keyword>
<organism>
    <name type="scientific">Streptomyces caespitosus</name>
    <dbReference type="NCBI Taxonomy" id="53502"/>
    <lineage>
        <taxon>Bacteria</taxon>
        <taxon>Bacillati</taxon>
        <taxon>Actinomycetota</taxon>
        <taxon>Actinomycetes</taxon>
        <taxon>Kitasatosporales</taxon>
        <taxon>Streptomycetaceae</taxon>
        <taxon>Streptomyces</taxon>
    </lineage>
</organism>
<feature type="chain" id="PRO_0000087933" description="Type II methyltransferase M.ScaI">
    <location>
        <begin position="1"/>
        <end position="304"/>
    </location>
</feature>
<protein>
    <recommendedName>
        <fullName evidence="2">Type II methyltransferase M.ScaI</fullName>
        <shortName evidence="3">M.ScaI</shortName>
        <ecNumber evidence="1">2.1.1.113</ecNumber>
    </recommendedName>
    <alternativeName>
        <fullName>Modification methylase ScaI</fullName>
    </alternativeName>
    <alternativeName>
        <fullName>N-4 cytosine-specific methyltransferase ScaI</fullName>
    </alternativeName>
</protein>
<name>MTS1_STRCS</name>
<evidence type="ECO:0000250" key="1">
    <source>
        <dbReference type="UniProtKB" id="Q04845"/>
    </source>
</evidence>
<evidence type="ECO:0000303" key="2">
    <source>
    </source>
</evidence>
<evidence type="ECO:0000303" key="3">
    <source>
    </source>
</evidence>
<evidence type="ECO:0000305" key="4"/>
<evidence type="ECO:0000305" key="5">
    <source>
    </source>
</evidence>
<sequence length="304" mass="34187">MSGRDFGYVIQSSAALWNRLSTFSQRGKALDTRLADIKKALGKPYYETSDVLLYHGDSLELLKSMPQQIFDLTVTSPPYNIGKEYEGVLSIEEYISWCETWMSRVHRATSAGGAFWLNVGYVPVPNQGKAVPIPYLLWDKSPFYMIQEVVWNYGAGVASRKSFSPRNEKFLWYVRDPLNYYFDLDSVRDPNVKYPNQKKNGKLKCNPLGKNPTDVWQFPKVTSGAKRSSVERTAHPAQFPSAVIERVIKACSPSDGVILDPFLGSGTTSLTARKQGRCSVGIEIREDYLDIAVGRLEAEAQSLF</sequence>
<accession>O52692</accession>
<reference key="1">
    <citation type="journal article" date="1998" name="Mol. Gen. Genet.">
        <title>Cloning and expression of the ApaLI, NspI, NspHI, SacI, ScaI, and SapI restriction-modification systems in Escherichia coli.</title>
        <authorList>
            <person name="Xu S.-Y."/>
            <person name="Xiao J.-P."/>
            <person name="Ettwiller L."/>
            <person name="Holden M."/>
            <person name="Aliotta J."/>
            <person name="Poh C.L."/>
            <person name="Dalton M."/>
            <person name="Robinson D.P."/>
            <person name="Petronzio T.R."/>
            <person name="Moran L."/>
            <person name="Ganatra M."/>
            <person name="Ware J."/>
            <person name="Slatko B."/>
            <person name="Benner J. II"/>
        </authorList>
    </citation>
    <scope>NUCLEOTIDE SEQUENCE [GENOMIC DNA]</scope>
    <scope>PROBABLE FUNCTION</scope>
</reference>
<reference key="2">
    <citation type="journal article" date="2003" name="Nucleic Acids Res.">
        <title>A nomenclature for restriction enzymes, DNA methyltransferases, homing endonucleases and their genes.</title>
        <authorList>
            <person name="Roberts R.J."/>
            <person name="Belfort M."/>
            <person name="Bestor T."/>
            <person name="Bhagwat A.S."/>
            <person name="Bickle T.A."/>
            <person name="Bitinaite J."/>
            <person name="Blumenthal R.M."/>
            <person name="Degtyarev S.K."/>
            <person name="Dryden D.T."/>
            <person name="Dybvig K."/>
            <person name="Firman K."/>
            <person name="Gromova E.S."/>
            <person name="Gumport R.I."/>
            <person name="Halford S.E."/>
            <person name="Hattman S."/>
            <person name="Heitman J."/>
            <person name="Hornby D.P."/>
            <person name="Janulaitis A."/>
            <person name="Jeltsch A."/>
            <person name="Josephsen J."/>
            <person name="Kiss A."/>
            <person name="Klaenhammer T.R."/>
            <person name="Kobayashi I."/>
            <person name="Kong H."/>
            <person name="Krueger D.H."/>
            <person name="Lacks S."/>
            <person name="Marinus M.G."/>
            <person name="Miyahara M."/>
            <person name="Morgan R.D."/>
            <person name="Murray N.E."/>
            <person name="Nagaraja V."/>
            <person name="Piekarowicz A."/>
            <person name="Pingoud A."/>
            <person name="Raleigh E."/>
            <person name="Rao D.N."/>
            <person name="Reich N."/>
            <person name="Repin V.E."/>
            <person name="Selker E.U."/>
            <person name="Shaw P.C."/>
            <person name="Stein D.C."/>
            <person name="Stoddard B.L."/>
            <person name="Szybalski W."/>
            <person name="Trautner T.A."/>
            <person name="Van Etten J.L."/>
            <person name="Vitor J.M."/>
            <person name="Wilson G.G."/>
            <person name="Xu S.Y."/>
        </authorList>
    </citation>
    <scope>NOMENCLATURE</scope>
</reference>
<comment type="function">
    <text evidence="2 5">A methylase that recognizes the double-stranded sequence 5'-AGTACT-3', methylates C-5 on both strands, and protects the DNA from cleavage by the ScaI endonuclease.</text>
</comment>
<comment type="catalytic activity">
    <reaction evidence="1">
        <text>a 2'-deoxycytidine in DNA + S-adenosyl-L-methionine = an N(4)-methyl-2'-deoxycytidine in DNA + S-adenosyl-L-homocysteine + H(+)</text>
        <dbReference type="Rhea" id="RHEA:16857"/>
        <dbReference type="Rhea" id="RHEA-COMP:11369"/>
        <dbReference type="Rhea" id="RHEA-COMP:13674"/>
        <dbReference type="ChEBI" id="CHEBI:15378"/>
        <dbReference type="ChEBI" id="CHEBI:57856"/>
        <dbReference type="ChEBI" id="CHEBI:59789"/>
        <dbReference type="ChEBI" id="CHEBI:85452"/>
        <dbReference type="ChEBI" id="CHEBI:137933"/>
        <dbReference type="EC" id="2.1.1.113"/>
    </reaction>
</comment>
<comment type="similarity">
    <text evidence="4">Belongs to the N(4)/N(6)-methyltransferase family. N(4) subfamily.</text>
</comment>
<gene>
    <name evidence="3" type="primary">scaIM</name>
</gene>